<accession>Q5X3K0</accession>
<sequence>MQNEYSQFEQRKRDHIELALMPANQSNELNPFDHFSLVHEALPDLDFKDISIQSIRFKKPVEKPFIISSMTAGHSNALEINSRLMEACSKTKWAMGVGSQRRELSDKQAAFEWAPLRRDFPMVSLFSNLGIAQLIDTPISAIQRLIDTLQAEALIIHCNPLQECIQPEGTTNFQGCWTALEALVKKIASPVIIKETGCGFSKNTLLRLNNIGVAAVDVSGVGGTHWGRIEGHRANKDPIRHRTADTFRNWGIDTLQSTRNAISLNPSFEVWGSGGVRNGLDAAKLFALGATTVGFAKPMLEAALDSTGQVLTQMNIIEYELKTAMFCTGSRVLDDLKEKACP</sequence>
<proteinExistence type="inferred from homology"/>
<dbReference type="EC" id="5.3.3.2" evidence="1"/>
<dbReference type="EMBL" id="CR628336">
    <property type="protein sequence ID" value="CAH13186.1"/>
    <property type="molecule type" value="Genomic_DNA"/>
</dbReference>
<dbReference type="RefSeq" id="WP_015961259.1">
    <property type="nucleotide sequence ID" value="NC_006368.1"/>
</dbReference>
<dbReference type="SMR" id="Q5X3K0"/>
<dbReference type="KEGG" id="lpp:lpp2034"/>
<dbReference type="LegioList" id="lpp2034"/>
<dbReference type="HOGENOM" id="CLU_065515_1_0_6"/>
<dbReference type="GO" id="GO:0005737">
    <property type="term" value="C:cytoplasm"/>
    <property type="evidence" value="ECO:0007669"/>
    <property type="project" value="UniProtKB-SubCell"/>
</dbReference>
<dbReference type="GO" id="GO:0010181">
    <property type="term" value="F:FMN binding"/>
    <property type="evidence" value="ECO:0007669"/>
    <property type="project" value="UniProtKB-UniRule"/>
</dbReference>
<dbReference type="GO" id="GO:0004452">
    <property type="term" value="F:isopentenyl-diphosphate delta-isomerase activity"/>
    <property type="evidence" value="ECO:0007669"/>
    <property type="project" value="UniProtKB-UniRule"/>
</dbReference>
<dbReference type="GO" id="GO:0000287">
    <property type="term" value="F:magnesium ion binding"/>
    <property type="evidence" value="ECO:0007669"/>
    <property type="project" value="UniProtKB-UniRule"/>
</dbReference>
<dbReference type="GO" id="GO:0070402">
    <property type="term" value="F:NADPH binding"/>
    <property type="evidence" value="ECO:0007669"/>
    <property type="project" value="UniProtKB-UniRule"/>
</dbReference>
<dbReference type="GO" id="GO:0016491">
    <property type="term" value="F:oxidoreductase activity"/>
    <property type="evidence" value="ECO:0007669"/>
    <property type="project" value="InterPro"/>
</dbReference>
<dbReference type="GO" id="GO:0008299">
    <property type="term" value="P:isoprenoid biosynthetic process"/>
    <property type="evidence" value="ECO:0007669"/>
    <property type="project" value="UniProtKB-UniRule"/>
</dbReference>
<dbReference type="CDD" id="cd02811">
    <property type="entry name" value="IDI-2_FMN"/>
    <property type="match status" value="1"/>
</dbReference>
<dbReference type="Gene3D" id="3.20.20.70">
    <property type="entry name" value="Aldolase class I"/>
    <property type="match status" value="1"/>
</dbReference>
<dbReference type="HAMAP" id="MF_00354">
    <property type="entry name" value="Idi_2"/>
    <property type="match status" value="1"/>
</dbReference>
<dbReference type="InterPro" id="IPR013785">
    <property type="entry name" value="Aldolase_TIM"/>
</dbReference>
<dbReference type="InterPro" id="IPR000262">
    <property type="entry name" value="FMN-dep_DH"/>
</dbReference>
<dbReference type="InterPro" id="IPR011179">
    <property type="entry name" value="IPdP_isomerase"/>
</dbReference>
<dbReference type="NCBIfam" id="TIGR02151">
    <property type="entry name" value="IPP_isom_2"/>
    <property type="match status" value="1"/>
</dbReference>
<dbReference type="PANTHER" id="PTHR43665">
    <property type="entry name" value="ISOPENTENYL-DIPHOSPHATE DELTA-ISOMERASE"/>
    <property type="match status" value="1"/>
</dbReference>
<dbReference type="PANTHER" id="PTHR43665:SF1">
    <property type="entry name" value="ISOPENTENYL-DIPHOSPHATE DELTA-ISOMERASE"/>
    <property type="match status" value="1"/>
</dbReference>
<dbReference type="Pfam" id="PF01070">
    <property type="entry name" value="FMN_dh"/>
    <property type="match status" value="1"/>
</dbReference>
<dbReference type="PIRSF" id="PIRSF003314">
    <property type="entry name" value="IPP_isomerase"/>
    <property type="match status" value="1"/>
</dbReference>
<dbReference type="SUPFAM" id="SSF51395">
    <property type="entry name" value="FMN-linked oxidoreductases"/>
    <property type="match status" value="1"/>
</dbReference>
<keyword id="KW-0963">Cytoplasm</keyword>
<keyword id="KW-0285">Flavoprotein</keyword>
<keyword id="KW-0288">FMN</keyword>
<keyword id="KW-0413">Isomerase</keyword>
<keyword id="KW-0414">Isoprene biosynthesis</keyword>
<keyword id="KW-0460">Magnesium</keyword>
<keyword id="KW-0479">Metal-binding</keyword>
<keyword id="KW-0521">NADP</keyword>
<comment type="function">
    <text evidence="1">Involved in the biosynthesis of isoprenoids. Catalyzes the 1,3-allylic rearrangement of the homoallylic substrate isopentenyl (IPP) to its allylic isomer, dimethylallyl diphosphate (DMAPP).</text>
</comment>
<comment type="catalytic activity">
    <reaction evidence="1">
        <text>isopentenyl diphosphate = dimethylallyl diphosphate</text>
        <dbReference type="Rhea" id="RHEA:23284"/>
        <dbReference type="ChEBI" id="CHEBI:57623"/>
        <dbReference type="ChEBI" id="CHEBI:128769"/>
        <dbReference type="EC" id="5.3.3.2"/>
    </reaction>
</comment>
<comment type="cofactor">
    <cofactor evidence="1">
        <name>FMN</name>
        <dbReference type="ChEBI" id="CHEBI:58210"/>
    </cofactor>
</comment>
<comment type="cofactor">
    <cofactor evidence="1">
        <name>NADPH</name>
        <dbReference type="ChEBI" id="CHEBI:57783"/>
    </cofactor>
</comment>
<comment type="cofactor">
    <cofactor evidence="1">
        <name>Mg(2+)</name>
        <dbReference type="ChEBI" id="CHEBI:18420"/>
    </cofactor>
</comment>
<comment type="subunit">
    <text evidence="1">Homooctamer. Dimer of tetramers.</text>
</comment>
<comment type="subcellular location">
    <subcellularLocation>
        <location evidence="1">Cytoplasm</location>
    </subcellularLocation>
</comment>
<comment type="similarity">
    <text evidence="1">Belongs to the IPP isomerase type 2 family.</text>
</comment>
<feature type="chain" id="PRO_1000048441" description="Isopentenyl-diphosphate delta-isomerase">
    <location>
        <begin position="1"/>
        <end position="342"/>
    </location>
</feature>
<feature type="binding site" evidence="1">
    <location>
        <begin position="11"/>
        <end position="12"/>
    </location>
    <ligand>
        <name>substrate</name>
    </ligand>
</feature>
<feature type="binding site" evidence="1">
    <location>
        <position position="68"/>
    </location>
    <ligand>
        <name>FMN</name>
        <dbReference type="ChEBI" id="CHEBI:58210"/>
    </ligand>
</feature>
<feature type="binding site" evidence="1">
    <location>
        <begin position="69"/>
        <end position="71"/>
    </location>
    <ligand>
        <name>FMN</name>
        <dbReference type="ChEBI" id="CHEBI:58210"/>
    </ligand>
</feature>
<feature type="binding site" evidence="1">
    <location>
        <begin position="99"/>
        <end position="101"/>
    </location>
    <ligand>
        <name>substrate</name>
    </ligand>
</feature>
<feature type="binding site" evidence="1">
    <location>
        <position position="99"/>
    </location>
    <ligand>
        <name>FMN</name>
        <dbReference type="ChEBI" id="CHEBI:58210"/>
    </ligand>
</feature>
<feature type="binding site" evidence="1">
    <location>
        <position position="128"/>
    </location>
    <ligand>
        <name>FMN</name>
        <dbReference type="ChEBI" id="CHEBI:58210"/>
    </ligand>
</feature>
<feature type="binding site" evidence="1">
    <location>
        <position position="162"/>
    </location>
    <ligand>
        <name>substrate</name>
    </ligand>
</feature>
<feature type="binding site" evidence="1">
    <location>
        <position position="163"/>
    </location>
    <ligand>
        <name>Mg(2+)</name>
        <dbReference type="ChEBI" id="CHEBI:18420"/>
    </ligand>
</feature>
<feature type="binding site" evidence="1">
    <location>
        <position position="194"/>
    </location>
    <ligand>
        <name>FMN</name>
        <dbReference type="ChEBI" id="CHEBI:58210"/>
    </ligand>
</feature>
<feature type="binding site" evidence="1">
    <location>
        <position position="219"/>
    </location>
    <ligand>
        <name>FMN</name>
        <dbReference type="ChEBI" id="CHEBI:58210"/>
    </ligand>
</feature>
<feature type="binding site" evidence="1">
    <location>
        <position position="224"/>
    </location>
    <ligand>
        <name>FMN</name>
        <dbReference type="ChEBI" id="CHEBI:58210"/>
    </ligand>
</feature>
<feature type="binding site" evidence="1">
    <location>
        <begin position="275"/>
        <end position="277"/>
    </location>
    <ligand>
        <name>FMN</name>
        <dbReference type="ChEBI" id="CHEBI:58210"/>
    </ligand>
</feature>
<feature type="binding site" evidence="1">
    <location>
        <begin position="296"/>
        <end position="297"/>
    </location>
    <ligand>
        <name>FMN</name>
        <dbReference type="ChEBI" id="CHEBI:58210"/>
    </ligand>
</feature>
<protein>
    <recommendedName>
        <fullName evidence="1">Isopentenyl-diphosphate delta-isomerase</fullName>
        <shortName evidence="1">IPP isomerase</shortName>
        <ecNumber evidence="1">5.3.3.2</ecNumber>
    </recommendedName>
    <alternativeName>
        <fullName evidence="1">Isopentenyl diphosphate:dimethylallyl diphosphate isomerase</fullName>
    </alternativeName>
    <alternativeName>
        <fullName evidence="1">Isopentenyl pyrophosphate isomerase</fullName>
    </alternativeName>
    <alternativeName>
        <fullName evidence="1">Type 2 isopentenyl diphosphate isomerase</fullName>
        <shortName evidence="1">IDI-2</shortName>
    </alternativeName>
</protein>
<reference key="1">
    <citation type="journal article" date="2004" name="Nat. Genet.">
        <title>Evidence in the Legionella pneumophila genome for exploitation of host cell functions and high genome plasticity.</title>
        <authorList>
            <person name="Cazalet C."/>
            <person name="Rusniok C."/>
            <person name="Brueggemann H."/>
            <person name="Zidane N."/>
            <person name="Magnier A."/>
            <person name="Ma L."/>
            <person name="Tichit M."/>
            <person name="Jarraud S."/>
            <person name="Bouchier C."/>
            <person name="Vandenesch F."/>
            <person name="Kunst F."/>
            <person name="Etienne J."/>
            <person name="Glaser P."/>
            <person name="Buchrieser C."/>
        </authorList>
    </citation>
    <scope>NUCLEOTIDE SEQUENCE [LARGE SCALE GENOMIC DNA]</scope>
    <source>
        <strain>Paris</strain>
    </source>
</reference>
<name>IDI2_LEGPA</name>
<evidence type="ECO:0000255" key="1">
    <source>
        <dbReference type="HAMAP-Rule" id="MF_00354"/>
    </source>
</evidence>
<organism>
    <name type="scientific">Legionella pneumophila (strain Paris)</name>
    <dbReference type="NCBI Taxonomy" id="297246"/>
    <lineage>
        <taxon>Bacteria</taxon>
        <taxon>Pseudomonadati</taxon>
        <taxon>Pseudomonadota</taxon>
        <taxon>Gammaproteobacteria</taxon>
        <taxon>Legionellales</taxon>
        <taxon>Legionellaceae</taxon>
        <taxon>Legionella</taxon>
    </lineage>
</organism>
<gene>
    <name evidence="1" type="primary">fni</name>
    <name type="ordered locus">lpp2034</name>
</gene>